<accession>Q38793</accession>
<protein>
    <recommendedName>
        <fullName evidence="1">Ribulose bisphosphate carboxylase small subunit, chloroplastic</fullName>
        <shortName evidence="1">RuBisCO small subunit</shortName>
    </recommendedName>
</protein>
<organism>
    <name type="scientific">Aegilops tauschii</name>
    <name type="common">Tausch's goatgrass</name>
    <name type="synonym">Aegilops squarrosa</name>
    <dbReference type="NCBI Taxonomy" id="37682"/>
    <lineage>
        <taxon>Eukaryota</taxon>
        <taxon>Viridiplantae</taxon>
        <taxon>Streptophyta</taxon>
        <taxon>Embryophyta</taxon>
        <taxon>Tracheophyta</taxon>
        <taxon>Spermatophyta</taxon>
        <taxon>Magnoliopsida</taxon>
        <taxon>Liliopsida</taxon>
        <taxon>Poales</taxon>
        <taxon>Poaceae</taxon>
        <taxon>BOP clade</taxon>
        <taxon>Pooideae</taxon>
        <taxon>Triticodae</taxon>
        <taxon>Triticeae</taxon>
        <taxon>Triticinae</taxon>
        <taxon>Aegilops</taxon>
    </lineage>
</organism>
<proteinExistence type="evidence at transcript level"/>
<name>RBS_AEGTA</name>
<feature type="transit peptide" description="Chloroplast" evidence="1">
    <location>
        <begin position="1"/>
        <end position="46"/>
    </location>
</feature>
<feature type="chain" id="PRO_0000031459" description="Ribulose bisphosphate carboxylase small subunit, chloroplastic" evidence="1">
    <location>
        <begin position="47"/>
        <end position="175"/>
    </location>
</feature>
<sequence>MAPTVMASSATSVAPFQGLKSTAGLPVSRRSNGASLGSVSNGGRIRCMQVWPIEGIKKFETLSYLPPLSTEGLLKQVDYLIRSKWVPCLEFRKVGFIFREHNVSPGYYDGRYWTMWKLPMFGCPAPTQVIPEVEEVRKEYPDPYCRIIGFDNMRQVQSVSFIASKPPGCEESGKA</sequence>
<evidence type="ECO:0000255" key="1">
    <source>
        <dbReference type="HAMAP-Rule" id="MF_00860"/>
    </source>
</evidence>
<keyword id="KW-0113">Calvin cycle</keyword>
<keyword id="KW-0120">Carbon dioxide fixation</keyword>
<keyword id="KW-0150">Chloroplast</keyword>
<keyword id="KW-0601">Photorespiration</keyword>
<keyword id="KW-0602">Photosynthesis</keyword>
<keyword id="KW-0934">Plastid</keyword>
<keyword id="KW-0809">Transit peptide</keyword>
<dbReference type="EMBL" id="X83095">
    <property type="protein sequence ID" value="CAA58150.1"/>
    <property type="molecule type" value="mRNA"/>
</dbReference>
<dbReference type="PIR" id="S49992">
    <property type="entry name" value="S49992"/>
</dbReference>
<dbReference type="SMR" id="Q38793"/>
<dbReference type="GO" id="GO:0009507">
    <property type="term" value="C:chloroplast"/>
    <property type="evidence" value="ECO:0007669"/>
    <property type="project" value="UniProtKB-SubCell"/>
</dbReference>
<dbReference type="GO" id="GO:0016984">
    <property type="term" value="F:ribulose-bisphosphate carboxylase activity"/>
    <property type="evidence" value="ECO:0007669"/>
    <property type="project" value="UniProtKB-UniRule"/>
</dbReference>
<dbReference type="GO" id="GO:0009853">
    <property type="term" value="P:photorespiration"/>
    <property type="evidence" value="ECO:0007669"/>
    <property type="project" value="UniProtKB-KW"/>
</dbReference>
<dbReference type="GO" id="GO:0019253">
    <property type="term" value="P:reductive pentose-phosphate cycle"/>
    <property type="evidence" value="ECO:0007669"/>
    <property type="project" value="UniProtKB-UniRule"/>
</dbReference>
<dbReference type="CDD" id="cd03527">
    <property type="entry name" value="RuBisCO_small"/>
    <property type="match status" value="1"/>
</dbReference>
<dbReference type="FunFam" id="3.30.190.10:FF:000001">
    <property type="entry name" value="Ribulose bisphosphate carboxylase small chain, chloroplastic"/>
    <property type="match status" value="1"/>
</dbReference>
<dbReference type="Gene3D" id="3.30.190.10">
    <property type="entry name" value="Ribulose bisphosphate carboxylase, small subunit"/>
    <property type="match status" value="1"/>
</dbReference>
<dbReference type="HAMAP" id="MF_00859">
    <property type="entry name" value="RuBisCO_S_bact"/>
    <property type="match status" value="1"/>
</dbReference>
<dbReference type="InterPro" id="IPR024681">
    <property type="entry name" value="RuBisCO_ssu"/>
</dbReference>
<dbReference type="InterPro" id="IPR000894">
    <property type="entry name" value="RuBisCO_ssu_dom"/>
</dbReference>
<dbReference type="InterPro" id="IPR024680">
    <property type="entry name" value="RuBisCO_ssu_N"/>
</dbReference>
<dbReference type="InterPro" id="IPR036385">
    <property type="entry name" value="RuBisCO_ssu_sf"/>
</dbReference>
<dbReference type="PANTHER" id="PTHR31262">
    <property type="entry name" value="RIBULOSE BISPHOSPHATE CARBOXYLASE SMALL CHAIN 1, CHLOROPLASTIC"/>
    <property type="match status" value="1"/>
</dbReference>
<dbReference type="PANTHER" id="PTHR31262:SF10">
    <property type="entry name" value="RIBULOSE BISPHOSPHATE CARBOXYLASE SMALL SUBUNIT 1A, CHLOROPLASTIC-RELATED"/>
    <property type="match status" value="1"/>
</dbReference>
<dbReference type="Pfam" id="PF12338">
    <property type="entry name" value="RbcS"/>
    <property type="match status" value="1"/>
</dbReference>
<dbReference type="Pfam" id="PF00101">
    <property type="entry name" value="RuBisCO_small"/>
    <property type="match status" value="1"/>
</dbReference>
<dbReference type="PRINTS" id="PR00152">
    <property type="entry name" value="RUBISCOSMALL"/>
</dbReference>
<dbReference type="SMART" id="SM00961">
    <property type="entry name" value="RuBisCO_small"/>
    <property type="match status" value="1"/>
</dbReference>
<dbReference type="SUPFAM" id="SSF55239">
    <property type="entry name" value="RuBisCO, small subunit"/>
    <property type="match status" value="1"/>
</dbReference>
<reference key="1">
    <citation type="journal article" date="1995" name="Plant Physiol.">
        <title>Nucleotide sequence of a cDNA encoding the small subunit of ribulose-1,5-bisphosphate carboxylase/oxygenase from Aegilops squarrosa.</title>
        <authorList>
            <person name="Guo S.D."/>
            <person name="Wu G.Y."/>
            <person name="Wu X.Y."/>
        </authorList>
    </citation>
    <scope>NUCLEOTIDE SEQUENCE [MRNA]</scope>
    <source>
        <tissue>Leaf</tissue>
    </source>
</reference>
<gene>
    <name evidence="1" type="primary">RBCS</name>
</gene>
<comment type="function">
    <text evidence="1">RuBisCO catalyzes two reactions: the carboxylation of D-ribulose 1,5-bisphosphate, the primary event in carbon dioxide fixation, as well as the oxidative fragmentation of the pentose substrate. Both reactions occur simultaneously and in competition at the same active site. Although the small subunit is not catalytic it is essential for maximal activity.</text>
</comment>
<comment type="subunit">
    <text evidence="1">Heterohexadecamer of 8 large and 8 small subunits.</text>
</comment>
<comment type="subcellular location">
    <subcellularLocation>
        <location evidence="1">Plastid</location>
        <location evidence="1">Chloroplast</location>
    </subcellularLocation>
</comment>
<comment type="miscellaneous">
    <text evidence="1">The basic functional RuBisCO is composed of a large chain homodimer in a 'head-to-tail' conformation. In form I RuBisCO this homodimer is arranged in a barrel-like tetramer with the small subunits forming a tetrameric 'cap' on each end of the 'barrel'.</text>
</comment>
<comment type="similarity">
    <text evidence="1">Belongs to the RuBisCO small chain family.</text>
</comment>